<name>KAD_HAHCH</name>
<keyword id="KW-0067">ATP-binding</keyword>
<keyword id="KW-0963">Cytoplasm</keyword>
<keyword id="KW-0418">Kinase</keyword>
<keyword id="KW-0545">Nucleotide biosynthesis</keyword>
<keyword id="KW-0547">Nucleotide-binding</keyword>
<keyword id="KW-1185">Reference proteome</keyword>
<keyword id="KW-0808">Transferase</keyword>
<sequence>MRIILLGAPGAGKGTQAQNIMKKFGIPQISTGDMLRAAVKAGSPLGLKVKEVMATGGLVSDETIIALVKDRIKEDDCANGFLFDGFPRTIPQAEALREAGVKIDHVVEIAVDDQEIIKRLSGRRVHEASGRVYHVDYNPPKVEGKDDVTGEPLVQREDDKEETVRKRLEVYHSQTAPLVDYYRSWAEKDADAAPEYLRVEGVGSVDEIRDRVFTGLQK</sequence>
<proteinExistence type="inferred from homology"/>
<reference key="1">
    <citation type="journal article" date="2005" name="Nucleic Acids Res.">
        <title>Genomic blueprint of Hahella chejuensis, a marine microbe producing an algicidal agent.</title>
        <authorList>
            <person name="Jeong H."/>
            <person name="Yim J.H."/>
            <person name="Lee C."/>
            <person name="Choi S.-H."/>
            <person name="Park Y.K."/>
            <person name="Yoon S.H."/>
            <person name="Hur C.-G."/>
            <person name="Kang H.-Y."/>
            <person name="Kim D."/>
            <person name="Lee H.H."/>
            <person name="Park K.H."/>
            <person name="Park S.-H."/>
            <person name="Park H.-S."/>
            <person name="Lee H.K."/>
            <person name="Oh T.K."/>
            <person name="Kim J.F."/>
        </authorList>
    </citation>
    <scope>NUCLEOTIDE SEQUENCE [LARGE SCALE GENOMIC DNA]</scope>
    <source>
        <strain>KCTC 2396</strain>
    </source>
</reference>
<organism>
    <name type="scientific">Hahella chejuensis (strain KCTC 2396)</name>
    <dbReference type="NCBI Taxonomy" id="349521"/>
    <lineage>
        <taxon>Bacteria</taxon>
        <taxon>Pseudomonadati</taxon>
        <taxon>Pseudomonadota</taxon>
        <taxon>Gammaproteobacteria</taxon>
        <taxon>Oceanospirillales</taxon>
        <taxon>Hahellaceae</taxon>
        <taxon>Hahella</taxon>
    </lineage>
</organism>
<comment type="function">
    <text evidence="1">Catalyzes the reversible transfer of the terminal phosphate group between ATP and AMP. Plays an important role in cellular energy homeostasis and in adenine nucleotide metabolism.</text>
</comment>
<comment type="catalytic activity">
    <reaction evidence="1">
        <text>AMP + ATP = 2 ADP</text>
        <dbReference type="Rhea" id="RHEA:12973"/>
        <dbReference type="ChEBI" id="CHEBI:30616"/>
        <dbReference type="ChEBI" id="CHEBI:456215"/>
        <dbReference type="ChEBI" id="CHEBI:456216"/>
        <dbReference type="EC" id="2.7.4.3"/>
    </reaction>
</comment>
<comment type="pathway">
    <text evidence="1">Purine metabolism; AMP biosynthesis via salvage pathway; AMP from ADP: step 1/1.</text>
</comment>
<comment type="subunit">
    <text evidence="1">Monomer.</text>
</comment>
<comment type="subcellular location">
    <subcellularLocation>
        <location evidence="1">Cytoplasm</location>
    </subcellularLocation>
</comment>
<comment type="domain">
    <text evidence="1">Consists of three domains, a large central CORE domain and two small peripheral domains, NMPbind and LID, which undergo movements during catalysis. The LID domain closes over the site of phosphoryl transfer upon ATP binding. Assembling and dissambling the active center during each catalytic cycle provides an effective means to prevent ATP hydrolysis.</text>
</comment>
<comment type="similarity">
    <text evidence="1">Belongs to the adenylate kinase family.</text>
</comment>
<protein>
    <recommendedName>
        <fullName evidence="1">Adenylate kinase</fullName>
        <shortName evidence="1">AK</shortName>
        <ecNumber evidence="1">2.7.4.3</ecNumber>
    </recommendedName>
    <alternativeName>
        <fullName evidence="1">ATP-AMP transphosphorylase</fullName>
    </alternativeName>
    <alternativeName>
        <fullName evidence="1">ATP:AMP phosphotransferase</fullName>
    </alternativeName>
    <alternativeName>
        <fullName evidence="1">Adenylate monophosphate kinase</fullName>
    </alternativeName>
</protein>
<evidence type="ECO:0000255" key="1">
    <source>
        <dbReference type="HAMAP-Rule" id="MF_00235"/>
    </source>
</evidence>
<dbReference type="EC" id="2.7.4.3" evidence="1"/>
<dbReference type="EMBL" id="CP000155">
    <property type="protein sequence ID" value="ABC28653.1"/>
    <property type="molecule type" value="Genomic_DNA"/>
</dbReference>
<dbReference type="RefSeq" id="WP_011395725.1">
    <property type="nucleotide sequence ID" value="NC_007645.1"/>
</dbReference>
<dbReference type="SMR" id="Q2SL21"/>
<dbReference type="STRING" id="349521.HCH_01814"/>
<dbReference type="KEGG" id="hch:HCH_01814"/>
<dbReference type="eggNOG" id="COG0563">
    <property type="taxonomic scope" value="Bacteria"/>
</dbReference>
<dbReference type="HOGENOM" id="CLU_032354_1_2_6"/>
<dbReference type="OrthoDB" id="9805030at2"/>
<dbReference type="UniPathway" id="UPA00588">
    <property type="reaction ID" value="UER00649"/>
</dbReference>
<dbReference type="Proteomes" id="UP000000238">
    <property type="component" value="Chromosome"/>
</dbReference>
<dbReference type="GO" id="GO:0005737">
    <property type="term" value="C:cytoplasm"/>
    <property type="evidence" value="ECO:0007669"/>
    <property type="project" value="UniProtKB-SubCell"/>
</dbReference>
<dbReference type="GO" id="GO:0004017">
    <property type="term" value="F:adenylate kinase activity"/>
    <property type="evidence" value="ECO:0007669"/>
    <property type="project" value="UniProtKB-UniRule"/>
</dbReference>
<dbReference type="GO" id="GO:0005524">
    <property type="term" value="F:ATP binding"/>
    <property type="evidence" value="ECO:0007669"/>
    <property type="project" value="UniProtKB-UniRule"/>
</dbReference>
<dbReference type="GO" id="GO:0044209">
    <property type="term" value="P:AMP salvage"/>
    <property type="evidence" value="ECO:0007669"/>
    <property type="project" value="UniProtKB-UniRule"/>
</dbReference>
<dbReference type="CDD" id="cd01428">
    <property type="entry name" value="ADK"/>
    <property type="match status" value="1"/>
</dbReference>
<dbReference type="FunFam" id="3.40.50.300:FF:000106">
    <property type="entry name" value="Adenylate kinase mitochondrial"/>
    <property type="match status" value="1"/>
</dbReference>
<dbReference type="Gene3D" id="3.40.50.300">
    <property type="entry name" value="P-loop containing nucleotide triphosphate hydrolases"/>
    <property type="match status" value="1"/>
</dbReference>
<dbReference type="HAMAP" id="MF_00235">
    <property type="entry name" value="Adenylate_kinase_Adk"/>
    <property type="match status" value="1"/>
</dbReference>
<dbReference type="InterPro" id="IPR006259">
    <property type="entry name" value="Adenyl_kin_sub"/>
</dbReference>
<dbReference type="InterPro" id="IPR000850">
    <property type="entry name" value="Adenylat/UMP-CMP_kin"/>
</dbReference>
<dbReference type="InterPro" id="IPR033690">
    <property type="entry name" value="Adenylat_kinase_CS"/>
</dbReference>
<dbReference type="InterPro" id="IPR007862">
    <property type="entry name" value="Adenylate_kinase_lid-dom"/>
</dbReference>
<dbReference type="InterPro" id="IPR027417">
    <property type="entry name" value="P-loop_NTPase"/>
</dbReference>
<dbReference type="NCBIfam" id="TIGR01351">
    <property type="entry name" value="adk"/>
    <property type="match status" value="1"/>
</dbReference>
<dbReference type="NCBIfam" id="NF001379">
    <property type="entry name" value="PRK00279.1-1"/>
    <property type="match status" value="1"/>
</dbReference>
<dbReference type="NCBIfam" id="NF001380">
    <property type="entry name" value="PRK00279.1-2"/>
    <property type="match status" value="1"/>
</dbReference>
<dbReference type="NCBIfam" id="NF001381">
    <property type="entry name" value="PRK00279.1-3"/>
    <property type="match status" value="1"/>
</dbReference>
<dbReference type="NCBIfam" id="NF011100">
    <property type="entry name" value="PRK14527.1"/>
    <property type="match status" value="1"/>
</dbReference>
<dbReference type="PANTHER" id="PTHR23359">
    <property type="entry name" value="NUCLEOTIDE KINASE"/>
    <property type="match status" value="1"/>
</dbReference>
<dbReference type="Pfam" id="PF00406">
    <property type="entry name" value="ADK"/>
    <property type="match status" value="1"/>
</dbReference>
<dbReference type="Pfam" id="PF05191">
    <property type="entry name" value="ADK_lid"/>
    <property type="match status" value="1"/>
</dbReference>
<dbReference type="PRINTS" id="PR00094">
    <property type="entry name" value="ADENYLTKNASE"/>
</dbReference>
<dbReference type="SUPFAM" id="SSF52540">
    <property type="entry name" value="P-loop containing nucleoside triphosphate hydrolases"/>
    <property type="match status" value="1"/>
</dbReference>
<dbReference type="PROSITE" id="PS00113">
    <property type="entry name" value="ADENYLATE_KINASE"/>
    <property type="match status" value="1"/>
</dbReference>
<gene>
    <name evidence="1" type="primary">adk</name>
    <name type="ordered locus">HCH_01814</name>
</gene>
<accession>Q2SL21</accession>
<feature type="chain" id="PRO_1000058838" description="Adenylate kinase">
    <location>
        <begin position="1"/>
        <end position="218"/>
    </location>
</feature>
<feature type="region of interest" description="NMP" evidence="1">
    <location>
        <begin position="30"/>
        <end position="59"/>
    </location>
</feature>
<feature type="region of interest" description="LID" evidence="1">
    <location>
        <begin position="122"/>
        <end position="159"/>
    </location>
</feature>
<feature type="binding site" evidence="1">
    <location>
        <begin position="10"/>
        <end position="15"/>
    </location>
    <ligand>
        <name>ATP</name>
        <dbReference type="ChEBI" id="CHEBI:30616"/>
    </ligand>
</feature>
<feature type="binding site" evidence="1">
    <location>
        <position position="31"/>
    </location>
    <ligand>
        <name>AMP</name>
        <dbReference type="ChEBI" id="CHEBI:456215"/>
    </ligand>
</feature>
<feature type="binding site" evidence="1">
    <location>
        <position position="36"/>
    </location>
    <ligand>
        <name>AMP</name>
        <dbReference type="ChEBI" id="CHEBI:456215"/>
    </ligand>
</feature>
<feature type="binding site" evidence="1">
    <location>
        <begin position="57"/>
        <end position="59"/>
    </location>
    <ligand>
        <name>AMP</name>
        <dbReference type="ChEBI" id="CHEBI:456215"/>
    </ligand>
</feature>
<feature type="binding site" evidence="1">
    <location>
        <begin position="85"/>
        <end position="88"/>
    </location>
    <ligand>
        <name>AMP</name>
        <dbReference type="ChEBI" id="CHEBI:456215"/>
    </ligand>
</feature>
<feature type="binding site" evidence="1">
    <location>
        <position position="92"/>
    </location>
    <ligand>
        <name>AMP</name>
        <dbReference type="ChEBI" id="CHEBI:456215"/>
    </ligand>
</feature>
<feature type="binding site" evidence="1">
    <location>
        <position position="123"/>
    </location>
    <ligand>
        <name>ATP</name>
        <dbReference type="ChEBI" id="CHEBI:30616"/>
    </ligand>
</feature>
<feature type="binding site" evidence="1">
    <location>
        <begin position="132"/>
        <end position="133"/>
    </location>
    <ligand>
        <name>ATP</name>
        <dbReference type="ChEBI" id="CHEBI:30616"/>
    </ligand>
</feature>
<feature type="binding site" evidence="1">
    <location>
        <position position="156"/>
    </location>
    <ligand>
        <name>AMP</name>
        <dbReference type="ChEBI" id="CHEBI:456215"/>
    </ligand>
</feature>
<feature type="binding site" evidence="1">
    <location>
        <position position="167"/>
    </location>
    <ligand>
        <name>AMP</name>
        <dbReference type="ChEBI" id="CHEBI:456215"/>
    </ligand>
</feature>
<feature type="binding site" evidence="1">
    <location>
        <position position="203"/>
    </location>
    <ligand>
        <name>ATP</name>
        <dbReference type="ChEBI" id="CHEBI:30616"/>
    </ligand>
</feature>